<protein>
    <recommendedName>
        <fullName evidence="1">NAD(P)H-quinone oxidoreductase subunit H</fullName>
        <ecNumber evidence="1">7.1.1.-</ecNumber>
    </recommendedName>
    <alternativeName>
        <fullName>NAD(P)H dehydrogenase subunit H</fullName>
    </alternativeName>
    <alternativeName>
        <fullName evidence="1">NADH-plastoquinone oxidoreductase subunit H</fullName>
    </alternativeName>
    <alternativeName>
        <fullName evidence="1">NDH-1 subunit H</fullName>
        <shortName evidence="1">NDH-H</shortName>
    </alternativeName>
</protein>
<reference key="1">
    <citation type="submission" date="2006-05" db="EMBL/GenBank/DDBJ databases">
        <authorList>
            <consortium name="Genoscope"/>
        </authorList>
    </citation>
    <scope>NUCLEOTIDE SEQUENCE [LARGE SCALE GENOMIC DNA]</scope>
    <source>
        <strain>WH7803</strain>
    </source>
</reference>
<feature type="chain" id="PRO_0000371939" description="NAD(P)H-quinone oxidoreductase subunit H">
    <location>
        <begin position="1"/>
        <end position="394"/>
    </location>
</feature>
<dbReference type="EC" id="7.1.1.-" evidence="1"/>
<dbReference type="EMBL" id="CT971583">
    <property type="protein sequence ID" value="CAK24740.1"/>
    <property type="molecule type" value="Genomic_DNA"/>
</dbReference>
<dbReference type="SMR" id="A5GP75"/>
<dbReference type="STRING" id="32051.SynWH7803_2314"/>
<dbReference type="KEGG" id="syx:SynWH7803_2314"/>
<dbReference type="eggNOG" id="COG0649">
    <property type="taxonomic scope" value="Bacteria"/>
</dbReference>
<dbReference type="HOGENOM" id="CLU_015134_1_2_3"/>
<dbReference type="OrthoDB" id="9801496at2"/>
<dbReference type="Proteomes" id="UP000001566">
    <property type="component" value="Chromosome"/>
</dbReference>
<dbReference type="GO" id="GO:0031676">
    <property type="term" value="C:plasma membrane-derived thylakoid membrane"/>
    <property type="evidence" value="ECO:0007669"/>
    <property type="project" value="UniProtKB-SubCell"/>
</dbReference>
<dbReference type="GO" id="GO:0051287">
    <property type="term" value="F:NAD binding"/>
    <property type="evidence" value="ECO:0007669"/>
    <property type="project" value="InterPro"/>
</dbReference>
<dbReference type="GO" id="GO:0016655">
    <property type="term" value="F:oxidoreductase activity, acting on NAD(P)H, quinone or similar compound as acceptor"/>
    <property type="evidence" value="ECO:0007669"/>
    <property type="project" value="UniProtKB-UniRule"/>
</dbReference>
<dbReference type="GO" id="GO:0048038">
    <property type="term" value="F:quinone binding"/>
    <property type="evidence" value="ECO:0007669"/>
    <property type="project" value="UniProtKB-KW"/>
</dbReference>
<dbReference type="GO" id="GO:0019684">
    <property type="term" value="P:photosynthesis, light reaction"/>
    <property type="evidence" value="ECO:0007669"/>
    <property type="project" value="UniProtKB-UniRule"/>
</dbReference>
<dbReference type="Gene3D" id="1.10.645.10">
    <property type="entry name" value="Cytochrome-c3 Hydrogenase, chain B"/>
    <property type="match status" value="1"/>
</dbReference>
<dbReference type="HAMAP" id="MF_01358">
    <property type="entry name" value="NDH1_NuoD"/>
    <property type="match status" value="1"/>
</dbReference>
<dbReference type="InterPro" id="IPR001135">
    <property type="entry name" value="NADH_Q_OxRdtase_suD"/>
</dbReference>
<dbReference type="InterPro" id="IPR014029">
    <property type="entry name" value="NADH_UbQ_OxRdtase_49kDa_CS"/>
</dbReference>
<dbReference type="InterPro" id="IPR022885">
    <property type="entry name" value="NDH1_su_D/H"/>
</dbReference>
<dbReference type="InterPro" id="IPR029014">
    <property type="entry name" value="NiFe-Hase_large"/>
</dbReference>
<dbReference type="NCBIfam" id="NF004739">
    <property type="entry name" value="PRK06075.1"/>
    <property type="match status" value="1"/>
</dbReference>
<dbReference type="NCBIfam" id="NF005649">
    <property type="entry name" value="PRK07415.1"/>
    <property type="match status" value="1"/>
</dbReference>
<dbReference type="PANTHER" id="PTHR11993:SF10">
    <property type="entry name" value="NADH DEHYDROGENASE [UBIQUINONE] IRON-SULFUR PROTEIN 2, MITOCHONDRIAL"/>
    <property type="match status" value="1"/>
</dbReference>
<dbReference type="PANTHER" id="PTHR11993">
    <property type="entry name" value="NADH-UBIQUINONE OXIDOREDUCTASE 49 KDA SUBUNIT"/>
    <property type="match status" value="1"/>
</dbReference>
<dbReference type="Pfam" id="PF00346">
    <property type="entry name" value="Complex1_49kDa"/>
    <property type="match status" value="1"/>
</dbReference>
<dbReference type="SUPFAM" id="SSF56762">
    <property type="entry name" value="HydB/Nqo4-like"/>
    <property type="match status" value="1"/>
</dbReference>
<dbReference type="PROSITE" id="PS00535">
    <property type="entry name" value="COMPLEX1_49K"/>
    <property type="match status" value="1"/>
</dbReference>
<evidence type="ECO:0000255" key="1">
    <source>
        <dbReference type="HAMAP-Rule" id="MF_01358"/>
    </source>
</evidence>
<organism>
    <name type="scientific">Synechococcus sp. (strain WH7803)</name>
    <dbReference type="NCBI Taxonomy" id="32051"/>
    <lineage>
        <taxon>Bacteria</taxon>
        <taxon>Bacillati</taxon>
        <taxon>Cyanobacteriota</taxon>
        <taxon>Cyanophyceae</taxon>
        <taxon>Synechococcales</taxon>
        <taxon>Synechococcaceae</taxon>
        <taxon>Synechococcus</taxon>
    </lineage>
</organism>
<keyword id="KW-0472">Membrane</keyword>
<keyword id="KW-0520">NAD</keyword>
<keyword id="KW-0521">NADP</keyword>
<keyword id="KW-0618">Plastoquinone</keyword>
<keyword id="KW-0874">Quinone</keyword>
<keyword id="KW-1185">Reference proteome</keyword>
<keyword id="KW-0793">Thylakoid</keyword>
<keyword id="KW-1278">Translocase</keyword>
<keyword id="KW-0813">Transport</keyword>
<proteinExistence type="inferred from homology"/>
<accession>A5GP75</accession>
<gene>
    <name evidence="1" type="primary">ndhH</name>
    <name type="ordered locus">SynWH7803_2314</name>
</gene>
<name>NDHH_SYNPW</name>
<sequence>MTQLETRTEPMVVNFGPHHPSMHGVLRLVVTLDGEDVVDCEPVIGYLHRGMEKIAENRTNVMFVPYVSRMDYAAGMFYEAVVVNAPEKLADIPVPKRASYIRVLMLELNRIANHLLWLGPFLADVGAQTPFFYIFREREMIYDLWEAATGQRLINNNYFRIGGVAADLPWGWLEKCRDFCDWFGPKIDEYEKLITNNPIFRRRIEGLGVIGKEEAINWSLSGPMLRASGVPWDLRKVDHYECYDDFDWDVAWEKEGDCFARYRVRIEEMRQSLKILRQACDMIPGGPTENVEARRMAEGKDSEFAGFDYQYVAKKVAPTFKIPNGELYTRLESGKGEIGIFIQGNNDVTPWRFKIRAADSNNLQILPHILKGHKVADIMAILGSIDVIMGSVDR</sequence>
<comment type="function">
    <text evidence="1">NDH-1 shuttles electrons from an unknown electron donor, via FMN and iron-sulfur (Fe-S) centers, to quinones in the respiratory and/or the photosynthetic chain. The immediate electron acceptor for the enzyme in this species is believed to be plastoquinone. Couples the redox reaction to proton translocation, and thus conserves the redox energy in a proton gradient. Cyanobacterial NDH-1 also plays a role in inorganic carbon-concentration.</text>
</comment>
<comment type="catalytic activity">
    <reaction evidence="1">
        <text>a plastoquinone + NADH + (n+1) H(+)(in) = a plastoquinol + NAD(+) + n H(+)(out)</text>
        <dbReference type="Rhea" id="RHEA:42608"/>
        <dbReference type="Rhea" id="RHEA-COMP:9561"/>
        <dbReference type="Rhea" id="RHEA-COMP:9562"/>
        <dbReference type="ChEBI" id="CHEBI:15378"/>
        <dbReference type="ChEBI" id="CHEBI:17757"/>
        <dbReference type="ChEBI" id="CHEBI:57540"/>
        <dbReference type="ChEBI" id="CHEBI:57945"/>
        <dbReference type="ChEBI" id="CHEBI:62192"/>
    </reaction>
</comment>
<comment type="catalytic activity">
    <reaction evidence="1">
        <text>a plastoquinone + NADPH + (n+1) H(+)(in) = a plastoquinol + NADP(+) + n H(+)(out)</text>
        <dbReference type="Rhea" id="RHEA:42612"/>
        <dbReference type="Rhea" id="RHEA-COMP:9561"/>
        <dbReference type="Rhea" id="RHEA-COMP:9562"/>
        <dbReference type="ChEBI" id="CHEBI:15378"/>
        <dbReference type="ChEBI" id="CHEBI:17757"/>
        <dbReference type="ChEBI" id="CHEBI:57783"/>
        <dbReference type="ChEBI" id="CHEBI:58349"/>
        <dbReference type="ChEBI" id="CHEBI:62192"/>
    </reaction>
</comment>
<comment type="subunit">
    <text evidence="1">NDH-1 can be composed of about 15 different subunits; different subcomplexes with different compositions have been identified which probably have different functions.</text>
</comment>
<comment type="subcellular location">
    <subcellularLocation>
        <location evidence="1">Cellular thylakoid membrane</location>
        <topology evidence="1">Peripheral membrane protein</topology>
        <orientation evidence="1">Cytoplasmic side</orientation>
    </subcellularLocation>
</comment>
<comment type="similarity">
    <text evidence="1">Belongs to the complex I 49 kDa subunit family.</text>
</comment>